<feature type="chain" id="PRO_0000404266" description="Uncharacterized protein p3">
    <location>
        <begin position="1"/>
        <end position="912"/>
    </location>
</feature>
<feature type="region of interest" description="Disordered" evidence="1">
    <location>
        <begin position="20"/>
        <end position="91"/>
    </location>
</feature>
<feature type="compositionally biased region" description="Basic and acidic residues" evidence="1">
    <location>
        <begin position="20"/>
        <end position="32"/>
    </location>
</feature>
<feature type="compositionally biased region" description="Basic and acidic residues" evidence="1">
    <location>
        <begin position="39"/>
        <end position="67"/>
    </location>
</feature>
<feature type="compositionally biased region" description="Basic residues" evidence="1">
    <location>
        <begin position="68"/>
        <end position="77"/>
    </location>
</feature>
<reference key="1">
    <citation type="journal article" date="2003" name="J. Mol. Biol.">
        <title>Three-dimensional structure of penicillium chrysogenum virus: a double-stranded RNA virus with a genuine T=1 capsid.</title>
        <authorList>
            <person name="Caston J.R."/>
            <person name="Ghabrial S.A."/>
            <person name="Jiang D."/>
            <person name="Rivas G."/>
            <person name="Alfonso C."/>
            <person name="Roca R."/>
            <person name="Luque D."/>
            <person name="Carrascosa J.L."/>
        </authorList>
    </citation>
    <scope>NUCLEOTIDE SEQUENCE [GENOMIC RNA]</scope>
</reference>
<gene>
    <name type="primary">p3</name>
</gene>
<protein>
    <recommendedName>
        <fullName>Uncharacterized protein p3</fullName>
    </recommendedName>
</protein>
<evidence type="ECO:0000256" key="1">
    <source>
        <dbReference type="SAM" id="MobiDB-lite"/>
    </source>
</evidence>
<dbReference type="EMBL" id="AF296441">
    <property type="protein sequence ID" value="AAM95603.1"/>
    <property type="molecule type" value="Genomic_RNA"/>
</dbReference>
<dbReference type="RefSeq" id="YP_392484.1">
    <property type="nucleotide sequence ID" value="NC_007541.1"/>
</dbReference>
<dbReference type="KEGG" id="vg:5075914"/>
<dbReference type="Proteomes" id="UP000006714">
    <property type="component" value="Genome"/>
</dbReference>
<proteinExistence type="predicted"/>
<accession>Q8JVC0</accession>
<organism>
    <name type="scientific">Penicillium chrysogenum virus (isolate Caston/2003)</name>
    <name type="common">PcV</name>
    <dbReference type="NCBI Taxonomy" id="654932"/>
    <lineage>
        <taxon>Viruses</taxon>
        <taxon>Riboviria</taxon>
        <taxon>Orthornavirae</taxon>
        <taxon>Duplornaviricota</taxon>
        <taxon>Chrymotiviricetes</taxon>
        <taxon>Ghabrivirales</taxon>
        <taxon>Chrysoviridae</taxon>
        <taxon>Alphachrysovirus</taxon>
        <taxon>Alphachrysovirus penicillii</taxon>
    </lineage>
</organism>
<organismHost>
    <name type="scientific">Penicillium chrysogenum</name>
    <name type="common">Penicillium notatum</name>
    <dbReference type="NCBI Taxonomy" id="5076"/>
</organismHost>
<keyword id="KW-1185">Reference proteome</keyword>
<name>P3_PCVC</name>
<sequence>MGFISNAILGKVTGLGTKQIERLREQGRAEPARHRRKLHEYEHTQGSRSHSSKDGSRKDRMSSEDKTRHKKLKHRSRQPGDKPTLPQPETDMVFGGLDKCPLYGVVMPMGHGKTTLAQEEGWIDCDSLITPSTKRRLAADALRKLADGDEYENAMAEMSSMMAKALQVLTPSKPAILLSHSVNLLKICQIPCLAILSLEDGVFEKNLRLRDEAEQCAARISKRHLEAAEGPGRPVITVQDNEHMRTVIYQIAESMDVELGAPRLLHPECSLPPGVGGTEWCDLTELVGMYESGRLPRAVLDYQINAQGLKAYRGYGFTMNDWAATAAHLVDNTCAADGAIPSLDNWPLTLEGIGKTFDMSEDIDGQALLAAHGGEDEAFTLGLLLHWKMYGLKSDTTGRLRLLYYVRRNRWDLVMRKVRQGVLGSGTFMGEPITLAERDILLSLHMLSSTSVSALVAKWRDEKMGYPSSRPSKRLMCHFDDILPHLVVQVPGSDPSYERAAWDVFLSGNLKPLRECAAGLLGECKLKRKHVISYLLGVRLLNEWEDEQGAHRVAREAMKQVATNWFRVGKIRDEWFDLIGAVLDGECRADDPIAQMAVMMTKTSSCQNLSGMPWGVRVAEAVQRIVMVGWCGLQMDQKVVLQQTENGVLPIVLGNREEDYIIELMKLGAPKYMTSVTGSEESVLATMAELADWSRSGVGLVLELVNAGSWLGQMSPKDRIALLANWATRRETTGVDSVLFGEILDRFSRQWLKRKFTPRAAEHLRNLGRISRRDGGLGIAERVYRGTVVPGKDGKSWNGKDAPRIKKEFVERVPKINLVACRNVLTSPKMGFKWNAHSLGMCGALVSCFLMGGDKHDIEGMCATVEGIKKHRVHPLASLPDWEQSYPEGAELDEAIEVGINDCMMMLEQARV</sequence>